<gene>
    <name type="ordered locus">CA_C1303</name>
</gene>
<feature type="chain" id="PRO_0000147304" description="GTP cyclohydrolase 1 type 2 homolog">
    <location>
        <begin position="1"/>
        <end position="268"/>
    </location>
</feature>
<feature type="binding site" evidence="1">
    <location>
        <position position="66"/>
    </location>
    <ligand>
        <name>a divalent metal cation</name>
        <dbReference type="ChEBI" id="CHEBI:60240"/>
        <label>1</label>
    </ligand>
</feature>
<feature type="binding site" evidence="1">
    <location>
        <position position="67"/>
    </location>
    <ligand>
        <name>a divalent metal cation</name>
        <dbReference type="ChEBI" id="CHEBI:60240"/>
        <label>2</label>
    </ligand>
</feature>
<feature type="binding site" evidence="1">
    <location>
        <position position="105"/>
    </location>
    <ligand>
        <name>a divalent metal cation</name>
        <dbReference type="ChEBI" id="CHEBI:60240"/>
        <label>1</label>
    </ligand>
</feature>
<feature type="binding site" evidence="1">
    <location>
        <position position="227"/>
    </location>
    <ligand>
        <name>a divalent metal cation</name>
        <dbReference type="ChEBI" id="CHEBI:60240"/>
        <label>2</label>
    </ligand>
</feature>
<feature type="binding site" evidence="1">
    <location>
        <position position="231"/>
    </location>
    <ligand>
        <name>a divalent metal cation</name>
        <dbReference type="ChEBI" id="CHEBI:60240"/>
        <label>1</label>
    </ligand>
</feature>
<feature type="binding site" evidence="1">
    <location>
        <position position="231"/>
    </location>
    <ligand>
        <name>a divalent metal cation</name>
        <dbReference type="ChEBI" id="CHEBI:60240"/>
        <label>2</label>
    </ligand>
</feature>
<organism>
    <name type="scientific">Clostridium acetobutylicum (strain ATCC 824 / DSM 792 / JCM 1419 / IAM 19013 / LMG 5710 / NBRC 13948 / NRRL B-527 / VKM B-1787 / 2291 / W)</name>
    <dbReference type="NCBI Taxonomy" id="272562"/>
    <lineage>
        <taxon>Bacteria</taxon>
        <taxon>Bacillati</taxon>
        <taxon>Bacillota</taxon>
        <taxon>Clostridia</taxon>
        <taxon>Eubacteriales</taxon>
        <taxon>Clostridiaceae</taxon>
        <taxon>Clostridium</taxon>
    </lineage>
</organism>
<accession>Q97JI0</accession>
<protein>
    <recommendedName>
        <fullName>GTP cyclohydrolase 1 type 2 homolog</fullName>
    </recommendedName>
</protein>
<keyword id="KW-0479">Metal-binding</keyword>
<keyword id="KW-1185">Reference proteome</keyword>
<comment type="subunit">
    <text evidence="1">Homohexamer.</text>
</comment>
<comment type="similarity">
    <text evidence="2">Belongs to the GTP cyclohydrolase I type 2/NIF3 family.</text>
</comment>
<dbReference type="EMBL" id="AE001437">
    <property type="protein sequence ID" value="AAK79274.1"/>
    <property type="molecule type" value="Genomic_DNA"/>
</dbReference>
<dbReference type="PIR" id="G97060">
    <property type="entry name" value="G97060"/>
</dbReference>
<dbReference type="RefSeq" id="NP_347934.1">
    <property type="nucleotide sequence ID" value="NC_003030.1"/>
</dbReference>
<dbReference type="RefSeq" id="WP_010964615.1">
    <property type="nucleotide sequence ID" value="NC_003030.1"/>
</dbReference>
<dbReference type="SMR" id="Q97JI0"/>
<dbReference type="STRING" id="272562.CA_C1303"/>
<dbReference type="KEGG" id="cac:CA_C1303"/>
<dbReference type="PATRIC" id="fig|272562.8.peg.1504"/>
<dbReference type="eggNOG" id="COG0327">
    <property type="taxonomic scope" value="Bacteria"/>
</dbReference>
<dbReference type="HOGENOM" id="CLU_037423_2_0_9"/>
<dbReference type="OrthoDB" id="9792792at2"/>
<dbReference type="Proteomes" id="UP000000814">
    <property type="component" value="Chromosome"/>
</dbReference>
<dbReference type="GO" id="GO:0005737">
    <property type="term" value="C:cytoplasm"/>
    <property type="evidence" value="ECO:0007669"/>
    <property type="project" value="TreeGrafter"/>
</dbReference>
<dbReference type="GO" id="GO:0046872">
    <property type="term" value="F:metal ion binding"/>
    <property type="evidence" value="ECO:0007669"/>
    <property type="project" value="UniProtKB-KW"/>
</dbReference>
<dbReference type="FunFam" id="3.40.1390.30:FF:000001">
    <property type="entry name" value="GTP cyclohydrolase 1 type 2"/>
    <property type="match status" value="1"/>
</dbReference>
<dbReference type="Gene3D" id="3.40.1390.30">
    <property type="entry name" value="NIF3 (NGG1p interacting factor 3)-like"/>
    <property type="match status" value="2"/>
</dbReference>
<dbReference type="InterPro" id="IPR002678">
    <property type="entry name" value="DUF34/NIF3"/>
</dbReference>
<dbReference type="InterPro" id="IPR036069">
    <property type="entry name" value="DUF34/NIF3_sf"/>
</dbReference>
<dbReference type="NCBIfam" id="TIGR00486">
    <property type="entry name" value="YbgI_SA1388"/>
    <property type="match status" value="1"/>
</dbReference>
<dbReference type="PANTHER" id="PTHR13799:SF14">
    <property type="entry name" value="GTP CYCLOHYDROLASE 1 TYPE 2 HOMOLOG"/>
    <property type="match status" value="1"/>
</dbReference>
<dbReference type="PANTHER" id="PTHR13799">
    <property type="entry name" value="NGG1 INTERACTING FACTOR 3"/>
    <property type="match status" value="1"/>
</dbReference>
<dbReference type="Pfam" id="PF01784">
    <property type="entry name" value="DUF34_NIF3"/>
    <property type="match status" value="1"/>
</dbReference>
<dbReference type="SUPFAM" id="SSF102705">
    <property type="entry name" value="NIF3 (NGG1p interacting factor 3)-like"/>
    <property type="match status" value="1"/>
</dbReference>
<reference key="1">
    <citation type="journal article" date="2001" name="J. Bacteriol.">
        <title>Genome sequence and comparative analysis of the solvent-producing bacterium Clostridium acetobutylicum.</title>
        <authorList>
            <person name="Noelling J."/>
            <person name="Breton G."/>
            <person name="Omelchenko M.V."/>
            <person name="Makarova K.S."/>
            <person name="Zeng Q."/>
            <person name="Gibson R."/>
            <person name="Lee H.M."/>
            <person name="Dubois J."/>
            <person name="Qiu D."/>
            <person name="Hitti J."/>
            <person name="Wolf Y.I."/>
            <person name="Tatusov R.L."/>
            <person name="Sabathe F."/>
            <person name="Doucette-Stamm L.A."/>
            <person name="Soucaille P."/>
            <person name="Daly M.J."/>
            <person name="Bennett G.N."/>
            <person name="Koonin E.V."/>
            <person name="Smith D.R."/>
        </authorList>
    </citation>
    <scope>NUCLEOTIDE SEQUENCE [LARGE SCALE GENOMIC DNA]</scope>
    <source>
        <strain>ATCC 824 / DSM 792 / JCM 1419 / IAM 19013 / LMG 5710 / NBRC 13948 / NRRL B-527 / VKM B-1787 / 2291 / W</strain>
    </source>
</reference>
<proteinExistence type="inferred from homology"/>
<evidence type="ECO:0000250" key="1">
    <source>
        <dbReference type="UniProtKB" id="P0AFP6"/>
    </source>
</evidence>
<evidence type="ECO:0000305" key="2"/>
<sequence>MSLKVKDLCNIIEDFAPISLKEDFDNVGLMVGDREASVDAIMTALDCTMDVIDEAIEKNCNMIITHHPILFKKPSKITMDTLLGKKIIKIISNNINVYSAHTNLDSVKDGINDAVVNILGFDKSSILAKNNKAVKEAGIGRVVELEQNMTLKELCDRVKESFKIQSLRYCGDEDKKIHSFAVINGSGQDFFEEARKRGVDCIITGDTSYHYVSDYNEMNIAVIDAGHFGTEWPSVVVMSKKLEGALHKMGINTPILVSQNNIDPYKFK</sequence>
<name>GCH1L_CLOAB</name>